<proteinExistence type="evidence at protein level"/>
<reference key="1">
    <citation type="journal article" date="2002" name="Int. J. Cancer">
        <title>The XAGE family of cancer/testis-associated genes: alignment and expression profile in normal tissues, melanoma lesions and Ewing's sarcoma.</title>
        <authorList>
            <person name="Zendman A.J.W."/>
            <person name="van Kraats A.A."/>
            <person name="Weidle U.H."/>
            <person name="Ruiter D.J."/>
            <person name="van Muijen G.N.P."/>
        </authorList>
    </citation>
    <scope>NUCLEOTIDE SEQUENCE [GENOMIC DNA]</scope>
</reference>
<reference key="2">
    <citation type="journal article" date="2005" name="Nature">
        <title>The DNA sequence of the human X chromosome.</title>
        <authorList>
            <person name="Ross M.T."/>
            <person name="Grafham D.V."/>
            <person name="Coffey A.J."/>
            <person name="Scherer S."/>
            <person name="McLay K."/>
            <person name="Muzny D."/>
            <person name="Platzer M."/>
            <person name="Howell G.R."/>
            <person name="Burrows C."/>
            <person name="Bird C.P."/>
            <person name="Frankish A."/>
            <person name="Lovell F.L."/>
            <person name="Howe K.L."/>
            <person name="Ashurst J.L."/>
            <person name="Fulton R.S."/>
            <person name="Sudbrak R."/>
            <person name="Wen G."/>
            <person name="Jones M.C."/>
            <person name="Hurles M.E."/>
            <person name="Andrews T.D."/>
            <person name="Scott C.E."/>
            <person name="Searle S."/>
            <person name="Ramser J."/>
            <person name="Whittaker A."/>
            <person name="Deadman R."/>
            <person name="Carter N.P."/>
            <person name="Hunt S.E."/>
            <person name="Chen R."/>
            <person name="Cree A."/>
            <person name="Gunaratne P."/>
            <person name="Havlak P."/>
            <person name="Hodgson A."/>
            <person name="Metzker M.L."/>
            <person name="Richards S."/>
            <person name="Scott G."/>
            <person name="Steffen D."/>
            <person name="Sodergren E."/>
            <person name="Wheeler D.A."/>
            <person name="Worley K.C."/>
            <person name="Ainscough R."/>
            <person name="Ambrose K.D."/>
            <person name="Ansari-Lari M.A."/>
            <person name="Aradhya S."/>
            <person name="Ashwell R.I."/>
            <person name="Babbage A.K."/>
            <person name="Bagguley C.L."/>
            <person name="Ballabio A."/>
            <person name="Banerjee R."/>
            <person name="Barker G.E."/>
            <person name="Barlow K.F."/>
            <person name="Barrett I.P."/>
            <person name="Bates K.N."/>
            <person name="Beare D.M."/>
            <person name="Beasley H."/>
            <person name="Beasley O."/>
            <person name="Beck A."/>
            <person name="Bethel G."/>
            <person name="Blechschmidt K."/>
            <person name="Brady N."/>
            <person name="Bray-Allen S."/>
            <person name="Bridgeman A.M."/>
            <person name="Brown A.J."/>
            <person name="Brown M.J."/>
            <person name="Bonnin D."/>
            <person name="Bruford E.A."/>
            <person name="Buhay C."/>
            <person name="Burch P."/>
            <person name="Burford D."/>
            <person name="Burgess J."/>
            <person name="Burrill W."/>
            <person name="Burton J."/>
            <person name="Bye J.M."/>
            <person name="Carder C."/>
            <person name="Carrel L."/>
            <person name="Chako J."/>
            <person name="Chapman J.C."/>
            <person name="Chavez D."/>
            <person name="Chen E."/>
            <person name="Chen G."/>
            <person name="Chen Y."/>
            <person name="Chen Z."/>
            <person name="Chinault C."/>
            <person name="Ciccodicola A."/>
            <person name="Clark S.Y."/>
            <person name="Clarke G."/>
            <person name="Clee C.M."/>
            <person name="Clegg S."/>
            <person name="Clerc-Blankenburg K."/>
            <person name="Clifford K."/>
            <person name="Cobley V."/>
            <person name="Cole C.G."/>
            <person name="Conquer J.S."/>
            <person name="Corby N."/>
            <person name="Connor R.E."/>
            <person name="David R."/>
            <person name="Davies J."/>
            <person name="Davis C."/>
            <person name="Davis J."/>
            <person name="Delgado O."/>
            <person name="Deshazo D."/>
            <person name="Dhami P."/>
            <person name="Ding Y."/>
            <person name="Dinh H."/>
            <person name="Dodsworth S."/>
            <person name="Draper H."/>
            <person name="Dugan-Rocha S."/>
            <person name="Dunham A."/>
            <person name="Dunn M."/>
            <person name="Durbin K.J."/>
            <person name="Dutta I."/>
            <person name="Eades T."/>
            <person name="Ellwood M."/>
            <person name="Emery-Cohen A."/>
            <person name="Errington H."/>
            <person name="Evans K.L."/>
            <person name="Faulkner L."/>
            <person name="Francis F."/>
            <person name="Frankland J."/>
            <person name="Fraser A.E."/>
            <person name="Galgoczy P."/>
            <person name="Gilbert J."/>
            <person name="Gill R."/>
            <person name="Gloeckner G."/>
            <person name="Gregory S.G."/>
            <person name="Gribble S."/>
            <person name="Griffiths C."/>
            <person name="Grocock R."/>
            <person name="Gu Y."/>
            <person name="Gwilliam R."/>
            <person name="Hamilton C."/>
            <person name="Hart E.A."/>
            <person name="Hawes A."/>
            <person name="Heath P.D."/>
            <person name="Heitmann K."/>
            <person name="Hennig S."/>
            <person name="Hernandez J."/>
            <person name="Hinzmann B."/>
            <person name="Ho S."/>
            <person name="Hoffs M."/>
            <person name="Howden P.J."/>
            <person name="Huckle E.J."/>
            <person name="Hume J."/>
            <person name="Hunt P.J."/>
            <person name="Hunt A.R."/>
            <person name="Isherwood J."/>
            <person name="Jacob L."/>
            <person name="Johnson D."/>
            <person name="Jones S."/>
            <person name="de Jong P.J."/>
            <person name="Joseph S.S."/>
            <person name="Keenan S."/>
            <person name="Kelly S."/>
            <person name="Kershaw J.K."/>
            <person name="Khan Z."/>
            <person name="Kioschis P."/>
            <person name="Klages S."/>
            <person name="Knights A.J."/>
            <person name="Kosiura A."/>
            <person name="Kovar-Smith C."/>
            <person name="Laird G.K."/>
            <person name="Langford C."/>
            <person name="Lawlor S."/>
            <person name="Leversha M."/>
            <person name="Lewis L."/>
            <person name="Liu W."/>
            <person name="Lloyd C."/>
            <person name="Lloyd D.M."/>
            <person name="Loulseged H."/>
            <person name="Loveland J.E."/>
            <person name="Lovell J.D."/>
            <person name="Lozado R."/>
            <person name="Lu J."/>
            <person name="Lyne R."/>
            <person name="Ma J."/>
            <person name="Maheshwari M."/>
            <person name="Matthews L.H."/>
            <person name="McDowall J."/>
            <person name="McLaren S."/>
            <person name="McMurray A."/>
            <person name="Meidl P."/>
            <person name="Meitinger T."/>
            <person name="Milne S."/>
            <person name="Miner G."/>
            <person name="Mistry S.L."/>
            <person name="Morgan M."/>
            <person name="Morris S."/>
            <person name="Mueller I."/>
            <person name="Mullikin J.C."/>
            <person name="Nguyen N."/>
            <person name="Nordsiek G."/>
            <person name="Nyakatura G."/>
            <person name="O'dell C.N."/>
            <person name="Okwuonu G."/>
            <person name="Palmer S."/>
            <person name="Pandian R."/>
            <person name="Parker D."/>
            <person name="Parrish J."/>
            <person name="Pasternak S."/>
            <person name="Patel D."/>
            <person name="Pearce A.V."/>
            <person name="Pearson D.M."/>
            <person name="Pelan S.E."/>
            <person name="Perez L."/>
            <person name="Porter K.M."/>
            <person name="Ramsey Y."/>
            <person name="Reichwald K."/>
            <person name="Rhodes S."/>
            <person name="Ridler K.A."/>
            <person name="Schlessinger D."/>
            <person name="Schueler M.G."/>
            <person name="Sehra H.K."/>
            <person name="Shaw-Smith C."/>
            <person name="Shen H."/>
            <person name="Sheridan E.M."/>
            <person name="Shownkeen R."/>
            <person name="Skuce C.D."/>
            <person name="Smith M.L."/>
            <person name="Sotheran E.C."/>
            <person name="Steingruber H.E."/>
            <person name="Steward C.A."/>
            <person name="Storey R."/>
            <person name="Swann R.M."/>
            <person name="Swarbreck D."/>
            <person name="Tabor P.E."/>
            <person name="Taudien S."/>
            <person name="Taylor T."/>
            <person name="Teague B."/>
            <person name="Thomas K."/>
            <person name="Thorpe A."/>
            <person name="Timms K."/>
            <person name="Tracey A."/>
            <person name="Trevanion S."/>
            <person name="Tromans A.C."/>
            <person name="d'Urso M."/>
            <person name="Verduzco D."/>
            <person name="Villasana D."/>
            <person name="Waldron L."/>
            <person name="Wall M."/>
            <person name="Wang Q."/>
            <person name="Warren J."/>
            <person name="Warry G.L."/>
            <person name="Wei X."/>
            <person name="West A."/>
            <person name="Whitehead S.L."/>
            <person name="Whiteley M.N."/>
            <person name="Wilkinson J.E."/>
            <person name="Willey D.L."/>
            <person name="Williams G."/>
            <person name="Williams L."/>
            <person name="Williamson A."/>
            <person name="Williamson H."/>
            <person name="Wilming L."/>
            <person name="Woodmansey R.L."/>
            <person name="Wray P.W."/>
            <person name="Yen J."/>
            <person name="Zhang J."/>
            <person name="Zhou J."/>
            <person name="Zoghbi H."/>
            <person name="Zorilla S."/>
            <person name="Buck D."/>
            <person name="Reinhardt R."/>
            <person name="Poustka A."/>
            <person name="Rosenthal A."/>
            <person name="Lehrach H."/>
            <person name="Meindl A."/>
            <person name="Minx P.J."/>
            <person name="Hillier L.W."/>
            <person name="Willard H.F."/>
            <person name="Wilson R.K."/>
            <person name="Waterston R.H."/>
            <person name="Rice C.M."/>
            <person name="Vaudin M."/>
            <person name="Coulson A."/>
            <person name="Nelson D.L."/>
            <person name="Weinstock G."/>
            <person name="Sulston J.E."/>
            <person name="Durbin R.M."/>
            <person name="Hubbard T."/>
            <person name="Gibbs R.A."/>
            <person name="Beck S."/>
            <person name="Rogers J."/>
            <person name="Bentley D.R."/>
        </authorList>
    </citation>
    <scope>NUCLEOTIDE SEQUENCE [LARGE SCALE GENOMIC DNA]</scope>
</reference>
<reference key="3">
    <citation type="journal article" date="2004" name="Genome Res.">
        <title>The status, quality, and expansion of the NIH full-length cDNA project: the Mammalian Gene Collection (MGC).</title>
        <authorList>
            <consortium name="The MGC Project Team"/>
        </authorList>
    </citation>
    <scope>NUCLEOTIDE SEQUENCE [LARGE SCALE MRNA]</scope>
</reference>
<organism>
    <name type="scientific">Homo sapiens</name>
    <name type="common">Human</name>
    <dbReference type="NCBI Taxonomy" id="9606"/>
    <lineage>
        <taxon>Eukaryota</taxon>
        <taxon>Metazoa</taxon>
        <taxon>Chordata</taxon>
        <taxon>Craniata</taxon>
        <taxon>Vertebrata</taxon>
        <taxon>Euteleostomi</taxon>
        <taxon>Mammalia</taxon>
        <taxon>Eutheria</taxon>
        <taxon>Euarchontoglires</taxon>
        <taxon>Primates</taxon>
        <taxon>Haplorrhini</taxon>
        <taxon>Catarrhini</taxon>
        <taxon>Hominidae</taxon>
        <taxon>Homo</taxon>
    </lineage>
</organism>
<name>XAGE5_HUMAN</name>
<comment type="similarity">
    <text evidence="2">Belongs to the GAGE family.</text>
</comment>
<dbReference type="EMBL" id="AJ318894">
    <property type="protein sequence ID" value="CAC83015.1"/>
    <property type="molecule type" value="Genomic_DNA"/>
</dbReference>
<dbReference type="EMBL" id="AL445236">
    <property type="protein sequence ID" value="CAI41618.1"/>
    <property type="molecule type" value="Genomic_DNA"/>
</dbReference>
<dbReference type="EMBL" id="BC069129">
    <property type="protein sequence ID" value="AAH69129.1"/>
    <property type="molecule type" value="mRNA"/>
</dbReference>
<dbReference type="CCDS" id="CCDS14346.1"/>
<dbReference type="RefSeq" id="NP_001373899.1">
    <property type="nucleotide sequence ID" value="NM_001386970.1"/>
</dbReference>
<dbReference type="RefSeq" id="NP_570131.1">
    <property type="nucleotide sequence ID" value="NM_130775.3"/>
</dbReference>
<dbReference type="RefSeq" id="XP_016884809.1">
    <property type="nucleotide sequence ID" value="XM_017029320.1"/>
</dbReference>
<dbReference type="STRING" id="9606.ENSP00000342240"/>
<dbReference type="BioMuta" id="XAGE5"/>
<dbReference type="DMDM" id="27805770"/>
<dbReference type="MassIVE" id="Q8WWM1"/>
<dbReference type="PaxDb" id="9606-ENSP00000342240"/>
<dbReference type="PeptideAtlas" id="Q8WWM1"/>
<dbReference type="ProteomicsDB" id="74905"/>
<dbReference type="Antibodypedia" id="54446">
    <property type="antibodies" value="4 antibodies from 4 providers"/>
</dbReference>
<dbReference type="DNASU" id="170627"/>
<dbReference type="Ensembl" id="ENST00000375501.2">
    <property type="protein sequence ID" value="ENSP00000364651.1"/>
    <property type="gene ID" value="ENSG00000171405.14"/>
</dbReference>
<dbReference type="GeneID" id="170627"/>
<dbReference type="KEGG" id="hsa:170627"/>
<dbReference type="MANE-Select" id="ENST00000375501.2">
    <property type="protein sequence ID" value="ENSP00000364651.1"/>
    <property type="RefSeq nucleotide sequence ID" value="NM_001386970.1"/>
    <property type="RefSeq protein sequence ID" value="NP_001373899.1"/>
</dbReference>
<dbReference type="UCSC" id="uc064zio.1">
    <property type="organism name" value="human"/>
</dbReference>
<dbReference type="AGR" id="HGNC:30930"/>
<dbReference type="CTD" id="170627"/>
<dbReference type="GeneCards" id="XAGE5"/>
<dbReference type="HGNC" id="HGNC:30930">
    <property type="gene designation" value="XAGE5"/>
</dbReference>
<dbReference type="HPA" id="ENSG00000171405">
    <property type="expression patterns" value="Tissue enriched (testis)"/>
</dbReference>
<dbReference type="neXtProt" id="NX_Q8WWM1"/>
<dbReference type="PharmGKB" id="PA134961730"/>
<dbReference type="VEuPathDB" id="HostDB:ENSG00000171405"/>
<dbReference type="eggNOG" id="ENOG502TF3A">
    <property type="taxonomic scope" value="Eukaryota"/>
</dbReference>
<dbReference type="GeneTree" id="ENSGT00940000153097"/>
<dbReference type="HOGENOM" id="CLU_150116_2_1_1"/>
<dbReference type="InParanoid" id="Q8WWM1"/>
<dbReference type="OMA" id="KSEQCKM"/>
<dbReference type="OrthoDB" id="9538795at2759"/>
<dbReference type="PAN-GO" id="Q8WWM1">
    <property type="GO annotations" value="0 GO annotations based on evolutionary models"/>
</dbReference>
<dbReference type="PhylomeDB" id="Q8WWM1"/>
<dbReference type="TreeFam" id="TF340669"/>
<dbReference type="PathwayCommons" id="Q8WWM1"/>
<dbReference type="BioGRID-ORCS" id="170627">
    <property type="hits" value="8 hits in 688 CRISPR screens"/>
</dbReference>
<dbReference type="GenomeRNAi" id="170627"/>
<dbReference type="Pharos" id="Q8WWM1">
    <property type="development level" value="Tdark"/>
</dbReference>
<dbReference type="PRO" id="PR:Q8WWM1"/>
<dbReference type="Proteomes" id="UP000005640">
    <property type="component" value="Chromosome X"/>
</dbReference>
<dbReference type="RNAct" id="Q8WWM1">
    <property type="molecule type" value="protein"/>
</dbReference>
<dbReference type="Bgee" id="ENSG00000171405">
    <property type="expression patterns" value="Expressed in male germ line stem cell (sensu Vertebrata) in testis and 17 other cell types or tissues"/>
</dbReference>
<dbReference type="ExpressionAtlas" id="Q8WWM1">
    <property type="expression patterns" value="baseline and differential"/>
</dbReference>
<dbReference type="InterPro" id="IPR031320">
    <property type="entry name" value="GAGE"/>
</dbReference>
<dbReference type="InterPro" id="IPR008625">
    <property type="entry name" value="GAGE_fam"/>
</dbReference>
<dbReference type="PANTHER" id="PTHR14047">
    <property type="entry name" value="P ANTIGEN FAMILY MEMBER 5-RELATED"/>
    <property type="match status" value="1"/>
</dbReference>
<dbReference type="PANTHER" id="PTHR14047:SF33">
    <property type="entry name" value="X ANTIGEN FAMILY MEMBER 5"/>
    <property type="match status" value="1"/>
</dbReference>
<dbReference type="Pfam" id="PF05831">
    <property type="entry name" value="GAGE"/>
    <property type="match status" value="1"/>
</dbReference>
<dbReference type="SMART" id="SM01379">
    <property type="entry name" value="GAGE"/>
    <property type="match status" value="1"/>
</dbReference>
<accession>Q8WWM1</accession>
<accession>Q5JS81</accession>
<feature type="chain" id="PRO_0000148352" description="X antigen family member 5">
    <location>
        <begin position="1"/>
        <end position="108"/>
    </location>
</feature>
<feature type="region of interest" description="Disordered" evidence="1">
    <location>
        <begin position="20"/>
        <end position="108"/>
    </location>
</feature>
<feature type="compositionally biased region" description="Basic and acidic residues" evidence="1">
    <location>
        <begin position="40"/>
        <end position="52"/>
    </location>
</feature>
<feature type="compositionally biased region" description="Basic and acidic residues" evidence="1">
    <location>
        <begin position="94"/>
        <end position="108"/>
    </location>
</feature>
<keyword id="KW-1267">Proteomics identification</keyword>
<keyword id="KW-1185">Reference proteome</keyword>
<gene>
    <name type="primary">XAGE5</name>
    <name type="synonym">GAGED5</name>
</gene>
<sequence>MSWRGRRYRPRRCLRLAQLVGPMLEPSVPEPQQEEPPTESQDHTPGQKREDDQGAAEIQVPNLEADLQELSQSKTGDECGDSPDVQGKILPKSEQFKMPEGGEGKPQL</sequence>
<evidence type="ECO:0000256" key="1">
    <source>
        <dbReference type="SAM" id="MobiDB-lite"/>
    </source>
</evidence>
<evidence type="ECO:0000305" key="2"/>
<protein>
    <recommendedName>
        <fullName>X antigen family member 5</fullName>
        <shortName>XAGE-5</shortName>
    </recommendedName>
    <alternativeName>
        <fullName>Cancer/testis antigen 12.5</fullName>
        <shortName>CT12.5</shortName>
    </alternativeName>
    <alternativeName>
        <fullName>G antigen family D member 5</fullName>
    </alternativeName>
</protein>